<gene>
    <name evidence="1" type="primary">adk</name>
    <name type="ordered locus">MSMEG_1484</name>
    <name type="ordered locus">MSMEI_1448</name>
</gene>
<feature type="chain" id="PRO_1000058855" description="Adenylate kinase">
    <location>
        <begin position="1"/>
        <end position="181"/>
    </location>
</feature>
<feature type="region of interest" description="NMP" evidence="1">
    <location>
        <begin position="30"/>
        <end position="59"/>
    </location>
</feature>
<feature type="region of interest" description="LID" evidence="1">
    <location>
        <begin position="126"/>
        <end position="132"/>
    </location>
</feature>
<feature type="binding site" evidence="1">
    <location>
        <begin position="10"/>
        <end position="15"/>
    </location>
    <ligand>
        <name>ATP</name>
        <dbReference type="ChEBI" id="CHEBI:30616"/>
    </ligand>
</feature>
<feature type="binding site" evidence="1">
    <location>
        <position position="31"/>
    </location>
    <ligand>
        <name>AMP</name>
        <dbReference type="ChEBI" id="CHEBI:456215"/>
    </ligand>
</feature>
<feature type="binding site" evidence="1">
    <location>
        <position position="36"/>
    </location>
    <ligand>
        <name>AMP</name>
        <dbReference type="ChEBI" id="CHEBI:456215"/>
    </ligand>
</feature>
<feature type="binding site" evidence="1">
    <location>
        <begin position="57"/>
        <end position="59"/>
    </location>
    <ligand>
        <name>AMP</name>
        <dbReference type="ChEBI" id="CHEBI:456215"/>
    </ligand>
</feature>
<feature type="binding site" evidence="1">
    <location>
        <begin position="85"/>
        <end position="88"/>
    </location>
    <ligand>
        <name>AMP</name>
        <dbReference type="ChEBI" id="CHEBI:456215"/>
    </ligand>
</feature>
<feature type="binding site" evidence="1">
    <location>
        <position position="92"/>
    </location>
    <ligand>
        <name>AMP</name>
        <dbReference type="ChEBI" id="CHEBI:456215"/>
    </ligand>
</feature>
<feature type="binding site" evidence="1">
    <location>
        <position position="127"/>
    </location>
    <ligand>
        <name>ATP</name>
        <dbReference type="ChEBI" id="CHEBI:30616"/>
    </ligand>
</feature>
<feature type="binding site" evidence="1">
    <location>
        <position position="129"/>
    </location>
    <ligand>
        <name>AMP</name>
        <dbReference type="ChEBI" id="CHEBI:456215"/>
    </ligand>
</feature>
<feature type="binding site" evidence="1">
    <location>
        <position position="140"/>
    </location>
    <ligand>
        <name>AMP</name>
        <dbReference type="ChEBI" id="CHEBI:456215"/>
    </ligand>
</feature>
<feature type="binding site" evidence="1">
    <location>
        <position position="166"/>
    </location>
    <ligand>
        <name>ATP</name>
        <dbReference type="ChEBI" id="CHEBI:30616"/>
    </ligand>
</feature>
<accession>A0QSH8</accession>
<accession>I7G444</accession>
<protein>
    <recommendedName>
        <fullName evidence="1">Adenylate kinase</fullName>
        <shortName evidence="1">AK</shortName>
        <ecNumber evidence="1">2.7.4.3</ecNumber>
    </recommendedName>
    <alternativeName>
        <fullName evidence="1">ATP-AMP transphosphorylase</fullName>
    </alternativeName>
    <alternativeName>
        <fullName evidence="1">ATP:AMP phosphotransferase</fullName>
    </alternativeName>
    <alternativeName>
        <fullName evidence="1">Adenylate monophosphate kinase</fullName>
    </alternativeName>
</protein>
<keyword id="KW-0067">ATP-binding</keyword>
<keyword id="KW-0963">Cytoplasm</keyword>
<keyword id="KW-0418">Kinase</keyword>
<keyword id="KW-0545">Nucleotide biosynthesis</keyword>
<keyword id="KW-0547">Nucleotide-binding</keyword>
<keyword id="KW-1185">Reference proteome</keyword>
<keyword id="KW-0808">Transferase</keyword>
<proteinExistence type="evidence at protein level"/>
<sequence>MRVVLLGPPGAGKGTQAEKLSEKLGIPQISTGDLFRKNIGDGTPLGLEAKRYLDAGDLVPAELTNRLVEDRIDQPDAAEGFILDGYPRSVEQAGALKDMLAARNTKLDAVLEFQVSEDELLTRLKGRGRADDTDEVIRNRMKVYREETEPLLEYYRDDLKTVNAVGALDEVFARALSALGQ</sequence>
<comment type="function">
    <text evidence="1">Catalyzes the reversible transfer of the terminal phosphate group between ATP and AMP. Plays an important role in cellular energy homeostasis and in adenine nucleotide metabolism.</text>
</comment>
<comment type="catalytic activity">
    <reaction evidence="1">
        <text>AMP + ATP = 2 ADP</text>
        <dbReference type="Rhea" id="RHEA:12973"/>
        <dbReference type="ChEBI" id="CHEBI:30616"/>
        <dbReference type="ChEBI" id="CHEBI:456215"/>
        <dbReference type="ChEBI" id="CHEBI:456216"/>
        <dbReference type="EC" id="2.7.4.3"/>
    </reaction>
</comment>
<comment type="pathway">
    <text evidence="1">Purine metabolism; AMP biosynthesis via salvage pathway; AMP from ADP: step 1/1.</text>
</comment>
<comment type="subunit">
    <text evidence="1">Monomer.</text>
</comment>
<comment type="subcellular location">
    <subcellularLocation>
        <location evidence="1">Cytoplasm</location>
    </subcellularLocation>
</comment>
<comment type="domain">
    <text evidence="1">Consists of three domains, a large central CORE domain and two small peripheral domains, NMPbind and LID, which undergo movements during catalysis. The LID domain closes over the site of phosphoryl transfer upon ATP binding. Assembling and dissambling the active center during each catalytic cycle provides an effective means to prevent ATP hydrolysis.</text>
</comment>
<comment type="similarity">
    <text evidence="1">Belongs to the adenylate kinase family.</text>
</comment>
<name>KAD_MYCS2</name>
<organism>
    <name type="scientific">Mycolicibacterium smegmatis (strain ATCC 700084 / mc(2)155)</name>
    <name type="common">Mycobacterium smegmatis</name>
    <dbReference type="NCBI Taxonomy" id="246196"/>
    <lineage>
        <taxon>Bacteria</taxon>
        <taxon>Bacillati</taxon>
        <taxon>Actinomycetota</taxon>
        <taxon>Actinomycetes</taxon>
        <taxon>Mycobacteriales</taxon>
        <taxon>Mycobacteriaceae</taxon>
        <taxon>Mycolicibacterium</taxon>
    </lineage>
</organism>
<dbReference type="EC" id="2.7.4.3" evidence="1"/>
<dbReference type="EMBL" id="CP000480">
    <property type="protein sequence ID" value="ABK75327.1"/>
    <property type="molecule type" value="Genomic_DNA"/>
</dbReference>
<dbReference type="EMBL" id="CP001663">
    <property type="protein sequence ID" value="AFP37921.1"/>
    <property type="molecule type" value="Genomic_DNA"/>
</dbReference>
<dbReference type="RefSeq" id="WP_003892871.1">
    <property type="nucleotide sequence ID" value="NZ_SIJM01000016.1"/>
</dbReference>
<dbReference type="RefSeq" id="YP_885866.1">
    <property type="nucleotide sequence ID" value="NC_008596.1"/>
</dbReference>
<dbReference type="SMR" id="A0QSH8"/>
<dbReference type="STRING" id="246196.MSMEG_1484"/>
<dbReference type="PaxDb" id="246196-MSMEI_1448"/>
<dbReference type="KEGG" id="msb:LJ00_07415"/>
<dbReference type="KEGG" id="msg:MSMEI_1448"/>
<dbReference type="KEGG" id="msm:MSMEG_1484"/>
<dbReference type="PATRIC" id="fig|246196.19.peg.1469"/>
<dbReference type="eggNOG" id="COG0563">
    <property type="taxonomic scope" value="Bacteria"/>
</dbReference>
<dbReference type="OrthoDB" id="9805030at2"/>
<dbReference type="UniPathway" id="UPA00588">
    <property type="reaction ID" value="UER00649"/>
</dbReference>
<dbReference type="Proteomes" id="UP000000757">
    <property type="component" value="Chromosome"/>
</dbReference>
<dbReference type="Proteomes" id="UP000006158">
    <property type="component" value="Chromosome"/>
</dbReference>
<dbReference type="GO" id="GO:0005737">
    <property type="term" value="C:cytoplasm"/>
    <property type="evidence" value="ECO:0007669"/>
    <property type="project" value="UniProtKB-SubCell"/>
</dbReference>
<dbReference type="GO" id="GO:0004017">
    <property type="term" value="F:adenylate kinase activity"/>
    <property type="evidence" value="ECO:0007669"/>
    <property type="project" value="UniProtKB-UniRule"/>
</dbReference>
<dbReference type="GO" id="GO:0005524">
    <property type="term" value="F:ATP binding"/>
    <property type="evidence" value="ECO:0007669"/>
    <property type="project" value="UniProtKB-UniRule"/>
</dbReference>
<dbReference type="GO" id="GO:0044209">
    <property type="term" value="P:AMP salvage"/>
    <property type="evidence" value="ECO:0007669"/>
    <property type="project" value="UniProtKB-UniRule"/>
</dbReference>
<dbReference type="CDD" id="cd01428">
    <property type="entry name" value="ADK"/>
    <property type="match status" value="1"/>
</dbReference>
<dbReference type="Gene3D" id="3.40.50.300">
    <property type="entry name" value="P-loop containing nucleotide triphosphate hydrolases"/>
    <property type="match status" value="1"/>
</dbReference>
<dbReference type="HAMAP" id="MF_00235">
    <property type="entry name" value="Adenylate_kinase_Adk"/>
    <property type="match status" value="1"/>
</dbReference>
<dbReference type="InterPro" id="IPR000850">
    <property type="entry name" value="Adenylat/UMP-CMP_kin"/>
</dbReference>
<dbReference type="InterPro" id="IPR033690">
    <property type="entry name" value="Adenylat_kinase_CS"/>
</dbReference>
<dbReference type="InterPro" id="IPR027417">
    <property type="entry name" value="P-loop_NTPase"/>
</dbReference>
<dbReference type="NCBIfam" id="NF001381">
    <property type="entry name" value="PRK00279.1-3"/>
    <property type="match status" value="1"/>
</dbReference>
<dbReference type="NCBIfam" id="NF011100">
    <property type="entry name" value="PRK14527.1"/>
    <property type="match status" value="1"/>
</dbReference>
<dbReference type="NCBIfam" id="NF011104">
    <property type="entry name" value="PRK14531.1"/>
    <property type="match status" value="1"/>
</dbReference>
<dbReference type="NCBIfam" id="NF011105">
    <property type="entry name" value="PRK14532.1"/>
    <property type="match status" value="1"/>
</dbReference>
<dbReference type="PANTHER" id="PTHR23359">
    <property type="entry name" value="NUCLEOTIDE KINASE"/>
    <property type="match status" value="1"/>
</dbReference>
<dbReference type="Pfam" id="PF00406">
    <property type="entry name" value="ADK"/>
    <property type="match status" value="1"/>
</dbReference>
<dbReference type="PRINTS" id="PR00094">
    <property type="entry name" value="ADENYLTKNASE"/>
</dbReference>
<dbReference type="SUPFAM" id="SSF52540">
    <property type="entry name" value="P-loop containing nucleoside triphosphate hydrolases"/>
    <property type="match status" value="1"/>
</dbReference>
<dbReference type="PROSITE" id="PS00113">
    <property type="entry name" value="ADENYLATE_KINASE"/>
    <property type="match status" value="1"/>
</dbReference>
<reference key="1">
    <citation type="submission" date="2006-10" db="EMBL/GenBank/DDBJ databases">
        <authorList>
            <person name="Fleischmann R.D."/>
            <person name="Dodson R.J."/>
            <person name="Haft D.H."/>
            <person name="Merkel J.S."/>
            <person name="Nelson W.C."/>
            <person name="Fraser C.M."/>
        </authorList>
    </citation>
    <scope>NUCLEOTIDE SEQUENCE [LARGE SCALE GENOMIC DNA]</scope>
    <source>
        <strain>ATCC 700084 / mc(2)155</strain>
    </source>
</reference>
<reference key="2">
    <citation type="journal article" date="2007" name="Genome Biol.">
        <title>Interrupted coding sequences in Mycobacterium smegmatis: authentic mutations or sequencing errors?</title>
        <authorList>
            <person name="Deshayes C."/>
            <person name="Perrodou E."/>
            <person name="Gallien S."/>
            <person name="Euphrasie D."/>
            <person name="Schaeffer C."/>
            <person name="Van-Dorsselaer A."/>
            <person name="Poch O."/>
            <person name="Lecompte O."/>
            <person name="Reyrat J.-M."/>
        </authorList>
    </citation>
    <scope>NUCLEOTIDE SEQUENCE [LARGE SCALE GENOMIC DNA]</scope>
    <source>
        <strain>ATCC 700084 / mc(2)155</strain>
    </source>
</reference>
<reference key="3">
    <citation type="journal article" date="2009" name="Genome Res.">
        <title>Ortho-proteogenomics: multiple proteomes investigation through orthology and a new MS-based protocol.</title>
        <authorList>
            <person name="Gallien S."/>
            <person name="Perrodou E."/>
            <person name="Carapito C."/>
            <person name="Deshayes C."/>
            <person name="Reyrat J.-M."/>
            <person name="Van Dorsselaer A."/>
            <person name="Poch O."/>
            <person name="Schaeffer C."/>
            <person name="Lecompte O."/>
        </authorList>
    </citation>
    <scope>NUCLEOTIDE SEQUENCE [LARGE SCALE GENOMIC DNA]</scope>
    <scope>IDENTIFICATION BY MASS SPECTROMETRY [LARGE SCALE ANALYSIS]</scope>
    <source>
        <strain>ATCC 700084 / mc(2)155</strain>
    </source>
</reference>
<evidence type="ECO:0000255" key="1">
    <source>
        <dbReference type="HAMAP-Rule" id="MF_00235"/>
    </source>
</evidence>